<evidence type="ECO:0000250" key="1">
    <source>
        <dbReference type="UniProtKB" id="Q6ZRF8"/>
    </source>
</evidence>
<evidence type="ECO:0000255" key="2"/>
<evidence type="ECO:0000255" key="3">
    <source>
        <dbReference type="PROSITE-ProRule" id="PRU00024"/>
    </source>
</evidence>
<evidence type="ECO:0000255" key="4">
    <source>
        <dbReference type="PROSITE-ProRule" id="PRU00175"/>
    </source>
</evidence>
<evidence type="ECO:0000256" key="5">
    <source>
        <dbReference type="SAM" id="MobiDB-lite"/>
    </source>
</evidence>
<evidence type="ECO:0000269" key="6">
    <source>
    </source>
</evidence>
<evidence type="ECO:0000312" key="7">
    <source>
        <dbReference type="EMBL" id="AFI56569.1"/>
    </source>
</evidence>
<reference key="1">
    <citation type="journal article" date="2014" name="J. Biol. Chem.">
        <title>RING finger protein RNF207, a novel regulator of cardiac excitation.</title>
        <authorList>
            <person name="Roder K."/>
            <person name="Werdich A.A."/>
            <person name="Li W."/>
            <person name="Liu M."/>
            <person name="Kim T.Y."/>
            <person name="Organ-Darling L.E."/>
            <person name="Moshal K.S."/>
            <person name="Hwang J.M."/>
            <person name="Lu Y."/>
            <person name="Choi B.R."/>
            <person name="MacRae C.A."/>
            <person name="Koren G."/>
        </authorList>
    </citation>
    <scope>NUCLEOTIDE SEQUENCE [MRNA]</scope>
    <scope>FUNCTION</scope>
    <source>
        <strain>New Zealand white</strain>
        <tissue>Heart</tissue>
    </source>
</reference>
<dbReference type="EMBL" id="JQ754141">
    <property type="protein sequence ID" value="AFI56569.1"/>
    <property type="molecule type" value="mRNA"/>
</dbReference>
<dbReference type="RefSeq" id="NP_001287860.1">
    <property type="nucleotide sequence ID" value="NM_001300931.1"/>
</dbReference>
<dbReference type="SMR" id="I1VZH0"/>
<dbReference type="FunCoup" id="I1VZH0">
    <property type="interactions" value="120"/>
</dbReference>
<dbReference type="STRING" id="9986.ENSOCUP00000032469"/>
<dbReference type="PaxDb" id="9986-ENSOCUP00000022153"/>
<dbReference type="GeneID" id="100351676"/>
<dbReference type="KEGG" id="ocu:100351676"/>
<dbReference type="CTD" id="388591"/>
<dbReference type="eggNOG" id="KOG4367">
    <property type="taxonomic scope" value="Eukaryota"/>
</dbReference>
<dbReference type="InParanoid" id="I1VZH0"/>
<dbReference type="OrthoDB" id="9049620at2759"/>
<dbReference type="Proteomes" id="UP000001811">
    <property type="component" value="Unplaced"/>
</dbReference>
<dbReference type="GO" id="GO:0048471">
    <property type="term" value="C:perinuclear region of cytoplasm"/>
    <property type="evidence" value="ECO:0007669"/>
    <property type="project" value="TreeGrafter"/>
</dbReference>
<dbReference type="GO" id="GO:0030544">
    <property type="term" value="F:Hsp70 protein binding"/>
    <property type="evidence" value="ECO:0007669"/>
    <property type="project" value="InterPro"/>
</dbReference>
<dbReference type="GO" id="GO:0044325">
    <property type="term" value="F:transmembrane transporter binding"/>
    <property type="evidence" value="ECO:0007669"/>
    <property type="project" value="TreeGrafter"/>
</dbReference>
<dbReference type="GO" id="GO:0008270">
    <property type="term" value="F:zinc ion binding"/>
    <property type="evidence" value="ECO:0007669"/>
    <property type="project" value="UniProtKB-KW"/>
</dbReference>
<dbReference type="GO" id="GO:0055117">
    <property type="term" value="P:regulation of cardiac muscle contraction"/>
    <property type="evidence" value="ECO:0007669"/>
    <property type="project" value="TreeGrafter"/>
</dbReference>
<dbReference type="GO" id="GO:1901207">
    <property type="term" value="P:regulation of heart looping"/>
    <property type="evidence" value="ECO:0007669"/>
    <property type="project" value="TreeGrafter"/>
</dbReference>
<dbReference type="CDD" id="cd19814">
    <property type="entry name" value="Bbox1_RNF207-like"/>
    <property type="match status" value="1"/>
</dbReference>
<dbReference type="FunFam" id="1.20.58.1540:FF:000002">
    <property type="entry name" value="Ring finger protein 207"/>
    <property type="match status" value="1"/>
</dbReference>
<dbReference type="FunFam" id="3.30.40.10:FF:000478">
    <property type="entry name" value="Ring finger protein 207"/>
    <property type="match status" value="1"/>
</dbReference>
<dbReference type="Gene3D" id="1.20.58.1540">
    <property type="entry name" value="Actin interacting protein 3, C-terminal domain"/>
    <property type="match status" value="1"/>
</dbReference>
<dbReference type="Gene3D" id="3.30.160.60">
    <property type="entry name" value="Classic Zinc Finger"/>
    <property type="match status" value="1"/>
</dbReference>
<dbReference type="Gene3D" id="3.30.40.10">
    <property type="entry name" value="Zinc/RING finger domain, C3HC4 (zinc finger)"/>
    <property type="match status" value="1"/>
</dbReference>
<dbReference type="InterPro" id="IPR039320">
    <property type="entry name" value="RNF207"/>
</dbReference>
<dbReference type="InterPro" id="IPR000315">
    <property type="entry name" value="Znf_B-box"/>
</dbReference>
<dbReference type="InterPro" id="IPR018957">
    <property type="entry name" value="Znf_C3HC4_RING-type"/>
</dbReference>
<dbReference type="InterPro" id="IPR001841">
    <property type="entry name" value="Znf_RING"/>
</dbReference>
<dbReference type="InterPro" id="IPR013083">
    <property type="entry name" value="Znf_RING/FYVE/PHD"/>
</dbReference>
<dbReference type="InterPro" id="IPR017907">
    <property type="entry name" value="Znf_RING_CS"/>
</dbReference>
<dbReference type="PANTHER" id="PTHR22635">
    <property type="entry name" value="RING FINGER PROTEIN 207"/>
    <property type="match status" value="1"/>
</dbReference>
<dbReference type="PANTHER" id="PTHR22635:SF0">
    <property type="entry name" value="RING FINGER PROTEIN 207"/>
    <property type="match status" value="1"/>
</dbReference>
<dbReference type="Pfam" id="PF00097">
    <property type="entry name" value="zf-C3HC4"/>
    <property type="match status" value="1"/>
</dbReference>
<dbReference type="SMART" id="SM00184">
    <property type="entry name" value="RING"/>
    <property type="match status" value="1"/>
</dbReference>
<dbReference type="SUPFAM" id="SSF57850">
    <property type="entry name" value="RING/U-box"/>
    <property type="match status" value="1"/>
</dbReference>
<dbReference type="PROSITE" id="PS50119">
    <property type="entry name" value="ZF_BBOX"/>
    <property type="match status" value="1"/>
</dbReference>
<dbReference type="PROSITE" id="PS00518">
    <property type="entry name" value="ZF_RING_1"/>
    <property type="match status" value="1"/>
</dbReference>
<dbReference type="PROSITE" id="PS50089">
    <property type="entry name" value="ZF_RING_2"/>
    <property type="match status" value="1"/>
</dbReference>
<comment type="function">
    <text evidence="6">Plays a role in cardiac repolarization possibly by stabilizing membrane expression of the potassium channel KCNH2/HERG, or by assisting its synthesis, folding or export from the endoplasmic reticulum, in a heat shock protein-dependent manner.</text>
</comment>
<comment type="subunit">
    <text evidence="1">Interacts with the core-glycosylated, but not the fully glycosylated form of KCNH2/HERG. Interacts with DNAJA1 and HSPA8. Interacts (via the C-terminus) with HSPA1A; this interaction additively increases KCNH2 expression.</text>
</comment>
<comment type="subcellular location">
    <subcellularLocation>
        <location evidence="1">Cytoplasm</location>
    </subcellularLocation>
    <text evidence="1">Probably located in the endoplasmic reticulum and/or possibly the cis-Golgi apparatus.</text>
</comment>
<proteinExistence type="evidence at transcript level"/>
<gene>
    <name type="primary">RNF207</name>
</gene>
<protein>
    <recommendedName>
        <fullName>RING finger protein 207</fullName>
    </recommendedName>
</protein>
<feature type="chain" id="PRO_0000436856" description="RING finger protein 207">
    <location>
        <begin position="1"/>
        <end position="594"/>
    </location>
</feature>
<feature type="zinc finger region" description="RING-type" evidence="4">
    <location>
        <begin position="25"/>
        <end position="64"/>
    </location>
</feature>
<feature type="zinc finger region" description="B box-type; atypical" evidence="3">
    <location>
        <begin position="93"/>
        <end position="145"/>
    </location>
</feature>
<feature type="region of interest" description="Disordered" evidence="5">
    <location>
        <begin position="369"/>
        <end position="400"/>
    </location>
</feature>
<feature type="region of interest" description="Disordered" evidence="5">
    <location>
        <begin position="552"/>
        <end position="594"/>
    </location>
</feature>
<feature type="coiled-coil region" evidence="2">
    <location>
        <begin position="424"/>
        <end position="458"/>
    </location>
</feature>
<feature type="compositionally biased region" description="Polar residues" evidence="5">
    <location>
        <begin position="562"/>
        <end position="575"/>
    </location>
</feature>
<feature type="binding site" evidence="3">
    <location>
        <position position="98"/>
    </location>
    <ligand>
        <name>Zn(2+)</name>
        <dbReference type="ChEBI" id="CHEBI:29105"/>
    </ligand>
</feature>
<feature type="binding site" evidence="3">
    <location>
        <position position="101"/>
    </location>
    <ligand>
        <name>Zn(2+)</name>
        <dbReference type="ChEBI" id="CHEBI:29105"/>
    </ligand>
</feature>
<feature type="binding site" evidence="3">
    <location>
        <position position="127"/>
    </location>
    <ligand>
        <name>Zn(2+)</name>
        <dbReference type="ChEBI" id="CHEBI:29105"/>
    </ligand>
</feature>
<feature type="binding site" evidence="3">
    <location>
        <position position="132"/>
    </location>
    <ligand>
        <name>Zn(2+)</name>
        <dbReference type="ChEBI" id="CHEBI:29105"/>
    </ligand>
</feature>
<name>RN207_RABIT</name>
<keyword id="KW-0175">Coiled coil</keyword>
<keyword id="KW-0963">Cytoplasm</keyword>
<keyword id="KW-0479">Metal-binding</keyword>
<keyword id="KW-1185">Reference proteome</keyword>
<keyword id="KW-0862">Zinc</keyword>
<keyword id="KW-0863">Zinc-finger</keyword>
<organism evidence="7">
    <name type="scientific">Oryctolagus cuniculus</name>
    <name type="common">Rabbit</name>
    <dbReference type="NCBI Taxonomy" id="9986"/>
    <lineage>
        <taxon>Eukaryota</taxon>
        <taxon>Metazoa</taxon>
        <taxon>Chordata</taxon>
        <taxon>Craniata</taxon>
        <taxon>Vertebrata</taxon>
        <taxon>Euteleostomi</taxon>
        <taxon>Mammalia</taxon>
        <taxon>Eutheria</taxon>
        <taxon>Euarchontoglires</taxon>
        <taxon>Glires</taxon>
        <taxon>Lagomorpha</taxon>
        <taxon>Leporidae</taxon>
        <taxon>Oryctolagus</taxon>
    </lineage>
</organism>
<accession>I1VZH0</accession>
<sequence length="594" mass="65682">MSGAIFAPLEGPGALDAASGHPLVCPLCHAQYERPCLLDCFHDFCAGCLRGRTADGRVACPLCQHQTVVKGPSGLPPVDRLLQFLVDSSGDGVEAVHCANCDLDCSKQDAETACFCNTCGQPLCARCRDETHRARMFARHDIVALGQRSRDVLQKCPLHAEPYLMFSTDKKSLLCIRCFRDLQGESRAHCVDLESAYVQGCERLEQAVLAVKALQAATREAIALLQAMVEEVRRSAEEEAAAIHALFDSVQEKLAERKALLLQAVQSQYEEKDQAFKEQLSHLATLLPTLQIHLVICSSFLSLANKAEFLDLGYELMERLQGVVTRPHRLRPAQSSKIASDYRAEFARCLEPLLLLGPRRATGAQGGANTLAGGSGPKVLMGPSCPSPVRKVSRSPVQKPTLPRSISTKVLLADGEDTPFAEHCRHYEDSYRGLQAEVQNLKDQVQELHRDLTKHHSLIRAEIMADILHRSLRLDAQIDSEYASVEGMRAVFQEIWEESYQRLAGEQEIYEAQLRDLFQLKQENAHLTTITKHITPYVRSIAKVKERLEPRFQASADDESENPQTAYDASRNGETPASLLLPGSVASAEPPFVN</sequence>